<evidence type="ECO:0000255" key="1">
    <source>
        <dbReference type="HAMAP-Rule" id="MF_01394"/>
    </source>
</evidence>
<comment type="function">
    <text evidence="1">NDH-1 shuttles electrons from NADH, via FMN and iron-sulfur (Fe-S) centers, to quinones in the respiratory chain. The immediate electron acceptor for the enzyme in this species is believed to be ubiquinone. Couples the redox reaction to proton translocation (for every two electrons transferred, four hydrogen ions are translocated across the cytoplasmic membrane), and thus conserves the redox energy in a proton gradient.</text>
</comment>
<comment type="catalytic activity">
    <reaction evidence="1">
        <text>a quinone + NADH + 5 H(+)(in) = a quinol + NAD(+) + 4 H(+)(out)</text>
        <dbReference type="Rhea" id="RHEA:57888"/>
        <dbReference type="ChEBI" id="CHEBI:15378"/>
        <dbReference type="ChEBI" id="CHEBI:24646"/>
        <dbReference type="ChEBI" id="CHEBI:57540"/>
        <dbReference type="ChEBI" id="CHEBI:57945"/>
        <dbReference type="ChEBI" id="CHEBI:132124"/>
    </reaction>
</comment>
<comment type="subunit">
    <text evidence="1">NDH-1 is composed of 13 different subunits. Subunits NuoA, H, J, K, L, M, N constitute the membrane sector of the complex.</text>
</comment>
<comment type="subcellular location">
    <subcellularLocation>
        <location evidence="1">Cell membrane</location>
        <topology evidence="1">Multi-pass membrane protein</topology>
    </subcellularLocation>
</comment>
<comment type="similarity">
    <text evidence="1">Belongs to the complex I subunit 3 family.</text>
</comment>
<reference key="1">
    <citation type="journal article" date="2003" name="Proc. Natl. Acad. Sci. U.S.A.">
        <title>Reductive genome evolution in Buchnera aphidicola.</title>
        <authorList>
            <person name="van Ham R.C.H.J."/>
            <person name="Kamerbeek J."/>
            <person name="Palacios C."/>
            <person name="Rausell C."/>
            <person name="Abascal F."/>
            <person name="Bastolla U."/>
            <person name="Fernandez J.M."/>
            <person name="Jimenez L."/>
            <person name="Postigo M."/>
            <person name="Silva F.J."/>
            <person name="Tamames J."/>
            <person name="Viguera E."/>
            <person name="Latorre A."/>
            <person name="Valencia A."/>
            <person name="Moran F."/>
            <person name="Moya A."/>
        </authorList>
    </citation>
    <scope>NUCLEOTIDE SEQUENCE [LARGE SCALE GENOMIC DNA]</scope>
    <source>
        <strain>Bp</strain>
    </source>
</reference>
<name>NUOA_BUCBP</name>
<dbReference type="EC" id="7.1.1.-" evidence="1"/>
<dbReference type="EMBL" id="AE016826">
    <property type="protein sequence ID" value="AAO26877.1"/>
    <property type="molecule type" value="Genomic_DNA"/>
</dbReference>
<dbReference type="RefSeq" id="WP_011091278.1">
    <property type="nucleotide sequence ID" value="NC_004545.1"/>
</dbReference>
<dbReference type="SMR" id="Q89AU6"/>
<dbReference type="STRING" id="224915.bbp_143"/>
<dbReference type="KEGG" id="bab:bbp_143"/>
<dbReference type="eggNOG" id="COG0838">
    <property type="taxonomic scope" value="Bacteria"/>
</dbReference>
<dbReference type="HOGENOM" id="CLU_119549_2_1_6"/>
<dbReference type="OrthoDB" id="9791970at2"/>
<dbReference type="Proteomes" id="UP000000601">
    <property type="component" value="Chromosome"/>
</dbReference>
<dbReference type="GO" id="GO:0030964">
    <property type="term" value="C:NADH dehydrogenase complex"/>
    <property type="evidence" value="ECO:0007669"/>
    <property type="project" value="TreeGrafter"/>
</dbReference>
<dbReference type="GO" id="GO:0005886">
    <property type="term" value="C:plasma membrane"/>
    <property type="evidence" value="ECO:0007669"/>
    <property type="project" value="UniProtKB-SubCell"/>
</dbReference>
<dbReference type="GO" id="GO:0008137">
    <property type="term" value="F:NADH dehydrogenase (ubiquinone) activity"/>
    <property type="evidence" value="ECO:0007669"/>
    <property type="project" value="InterPro"/>
</dbReference>
<dbReference type="GO" id="GO:0050136">
    <property type="term" value="F:NADH:ubiquinone reductase (non-electrogenic) activity"/>
    <property type="evidence" value="ECO:0007669"/>
    <property type="project" value="UniProtKB-UniRule"/>
</dbReference>
<dbReference type="GO" id="GO:0048038">
    <property type="term" value="F:quinone binding"/>
    <property type="evidence" value="ECO:0007669"/>
    <property type="project" value="UniProtKB-KW"/>
</dbReference>
<dbReference type="Gene3D" id="1.20.58.1610">
    <property type="entry name" value="NADH:ubiquinone/plastoquinone oxidoreductase, chain 3"/>
    <property type="match status" value="1"/>
</dbReference>
<dbReference type="HAMAP" id="MF_01394">
    <property type="entry name" value="NDH1_NuoA"/>
    <property type="match status" value="1"/>
</dbReference>
<dbReference type="InterPro" id="IPR023043">
    <property type="entry name" value="NAD(P)H_OxRDtase_bac/plastid"/>
</dbReference>
<dbReference type="InterPro" id="IPR000440">
    <property type="entry name" value="NADH_UbQ/plastoQ_OxRdtase_su3"/>
</dbReference>
<dbReference type="InterPro" id="IPR038430">
    <property type="entry name" value="NDAH_ubi_oxred_su3_sf"/>
</dbReference>
<dbReference type="PANTHER" id="PTHR11058:SF21">
    <property type="entry name" value="NADH-QUINONE OXIDOREDUCTASE SUBUNIT A"/>
    <property type="match status" value="1"/>
</dbReference>
<dbReference type="PANTHER" id="PTHR11058">
    <property type="entry name" value="NADH-UBIQUINONE OXIDOREDUCTASE CHAIN 3"/>
    <property type="match status" value="1"/>
</dbReference>
<dbReference type="Pfam" id="PF00507">
    <property type="entry name" value="Oxidored_q4"/>
    <property type="match status" value="1"/>
</dbReference>
<sequence>MLKSSVIAAQYWAFFTFFFIAVSICVFMLSISWILGGRSSSRYKNTPFESGIVPTNTTNMYCSVKFYLVAIYFVLFDVEALYLYAWSVSIVECGWIGFIEALIFILFLLSGLIYLISSKLLVWKSKNNIHVT</sequence>
<protein>
    <recommendedName>
        <fullName evidence="1">NADH-quinone oxidoreductase subunit A</fullName>
        <ecNumber evidence="1">7.1.1.-</ecNumber>
    </recommendedName>
    <alternativeName>
        <fullName evidence="1">NADH dehydrogenase I subunit A</fullName>
    </alternativeName>
    <alternativeName>
        <fullName evidence="1">NDH-1 subunit A</fullName>
    </alternativeName>
    <alternativeName>
        <fullName evidence="1">NUO1</fullName>
    </alternativeName>
</protein>
<proteinExistence type="inferred from homology"/>
<accession>Q89AU6</accession>
<feature type="chain" id="PRO_0000117868" description="NADH-quinone oxidoreductase subunit A">
    <location>
        <begin position="1"/>
        <end position="132"/>
    </location>
</feature>
<feature type="transmembrane region" description="Helical" evidence="1">
    <location>
        <begin position="14"/>
        <end position="34"/>
    </location>
</feature>
<feature type="transmembrane region" description="Helical" evidence="1">
    <location>
        <begin position="66"/>
        <end position="86"/>
    </location>
</feature>
<feature type="transmembrane region" description="Helical" evidence="1">
    <location>
        <begin position="96"/>
        <end position="116"/>
    </location>
</feature>
<keyword id="KW-1003">Cell membrane</keyword>
<keyword id="KW-0472">Membrane</keyword>
<keyword id="KW-0520">NAD</keyword>
<keyword id="KW-0874">Quinone</keyword>
<keyword id="KW-1185">Reference proteome</keyword>
<keyword id="KW-1278">Translocase</keyword>
<keyword id="KW-0812">Transmembrane</keyword>
<keyword id="KW-1133">Transmembrane helix</keyword>
<keyword id="KW-0813">Transport</keyword>
<keyword id="KW-0830">Ubiquinone</keyword>
<organism>
    <name type="scientific">Buchnera aphidicola subsp. Baizongia pistaciae (strain Bp)</name>
    <dbReference type="NCBI Taxonomy" id="224915"/>
    <lineage>
        <taxon>Bacteria</taxon>
        <taxon>Pseudomonadati</taxon>
        <taxon>Pseudomonadota</taxon>
        <taxon>Gammaproteobacteria</taxon>
        <taxon>Enterobacterales</taxon>
        <taxon>Erwiniaceae</taxon>
        <taxon>Buchnera</taxon>
    </lineage>
</organism>
<gene>
    <name evidence="1" type="primary">nuoA</name>
    <name type="ordered locus">bbp_143</name>
</gene>